<organism>
    <name type="scientific">Shewanella woodyi (strain ATCC 51908 / MS32)</name>
    <dbReference type="NCBI Taxonomy" id="392500"/>
    <lineage>
        <taxon>Bacteria</taxon>
        <taxon>Pseudomonadati</taxon>
        <taxon>Pseudomonadota</taxon>
        <taxon>Gammaproteobacteria</taxon>
        <taxon>Alteromonadales</taxon>
        <taxon>Shewanellaceae</taxon>
        <taxon>Shewanella</taxon>
    </lineage>
</organism>
<dbReference type="EMBL" id="CP000961">
    <property type="protein sequence ID" value="ACA86398.1"/>
    <property type="molecule type" value="Genomic_DNA"/>
</dbReference>
<dbReference type="RefSeq" id="WP_012324743.1">
    <property type="nucleotide sequence ID" value="NC_010506.1"/>
</dbReference>
<dbReference type="SMR" id="B1KRJ1"/>
<dbReference type="STRING" id="392500.Swoo_2114"/>
<dbReference type="KEGG" id="swd:Swoo_2114"/>
<dbReference type="eggNOG" id="COG0850">
    <property type="taxonomic scope" value="Bacteria"/>
</dbReference>
<dbReference type="HOGENOM" id="CLU_067812_0_1_6"/>
<dbReference type="Proteomes" id="UP000002168">
    <property type="component" value="Chromosome"/>
</dbReference>
<dbReference type="GO" id="GO:0000902">
    <property type="term" value="P:cell morphogenesis"/>
    <property type="evidence" value="ECO:0007669"/>
    <property type="project" value="InterPro"/>
</dbReference>
<dbReference type="GO" id="GO:0000917">
    <property type="term" value="P:division septum assembly"/>
    <property type="evidence" value="ECO:0007669"/>
    <property type="project" value="UniProtKB-KW"/>
</dbReference>
<dbReference type="GO" id="GO:0051302">
    <property type="term" value="P:regulation of cell division"/>
    <property type="evidence" value="ECO:0007669"/>
    <property type="project" value="InterPro"/>
</dbReference>
<dbReference type="GO" id="GO:1901891">
    <property type="term" value="P:regulation of cell septum assembly"/>
    <property type="evidence" value="ECO:0007669"/>
    <property type="project" value="InterPro"/>
</dbReference>
<dbReference type="Gene3D" id="2.160.20.70">
    <property type="match status" value="1"/>
</dbReference>
<dbReference type="Gene3D" id="3.30.70.260">
    <property type="match status" value="1"/>
</dbReference>
<dbReference type="HAMAP" id="MF_00267">
    <property type="entry name" value="MinC"/>
    <property type="match status" value="1"/>
</dbReference>
<dbReference type="InterPro" id="IPR016098">
    <property type="entry name" value="CAP/MinC_C"/>
</dbReference>
<dbReference type="InterPro" id="IPR013033">
    <property type="entry name" value="MinC"/>
</dbReference>
<dbReference type="InterPro" id="IPR036145">
    <property type="entry name" value="MinC_C_sf"/>
</dbReference>
<dbReference type="InterPro" id="IPR007874">
    <property type="entry name" value="MinC_N"/>
</dbReference>
<dbReference type="InterPro" id="IPR005526">
    <property type="entry name" value="Septum_form_inhib_MinC_C"/>
</dbReference>
<dbReference type="NCBIfam" id="TIGR01222">
    <property type="entry name" value="minC"/>
    <property type="match status" value="1"/>
</dbReference>
<dbReference type="PANTHER" id="PTHR34108">
    <property type="entry name" value="SEPTUM SITE-DETERMINING PROTEIN MINC"/>
    <property type="match status" value="1"/>
</dbReference>
<dbReference type="PANTHER" id="PTHR34108:SF1">
    <property type="entry name" value="SEPTUM SITE-DETERMINING PROTEIN MINC"/>
    <property type="match status" value="1"/>
</dbReference>
<dbReference type="Pfam" id="PF03775">
    <property type="entry name" value="MinC_C"/>
    <property type="match status" value="1"/>
</dbReference>
<dbReference type="Pfam" id="PF05209">
    <property type="entry name" value="MinC_N"/>
    <property type="match status" value="1"/>
</dbReference>
<dbReference type="SUPFAM" id="SSF63848">
    <property type="entry name" value="Cell-division inhibitor MinC, C-terminal domain"/>
    <property type="match status" value="1"/>
</dbReference>
<evidence type="ECO:0000255" key="1">
    <source>
        <dbReference type="HAMAP-Rule" id="MF_00267"/>
    </source>
</evidence>
<keyword id="KW-0131">Cell cycle</keyword>
<keyword id="KW-0132">Cell division</keyword>
<keyword id="KW-1185">Reference proteome</keyword>
<keyword id="KW-0717">Septation</keyword>
<proteinExistence type="inferred from homology"/>
<protein>
    <recommendedName>
        <fullName evidence="1">Probable septum site-determining protein MinC</fullName>
    </recommendedName>
</protein>
<sequence>MQTPSLELKGSSFTLSVLHINQLDLEKVTIELDGKLAIAPQFFLGAPLVVNLSRIKAPDYNLAALKDLLISRQLVIVGITEAIDEIATQAKALGLANIKSGKQSNTQPQLPKTSKIVKQNVRSGQQIYAKNADLVIFGTVGNGAEVIADGSIHIYGNLRGKAMAGASGDKHAIIIARSLEAELVSIAGQYWLAENIQHNSTTKSGCVRLEGESLTIEALPL</sequence>
<name>MINC_SHEWM</name>
<comment type="function">
    <text evidence="1">Cell division inhibitor that blocks the formation of polar Z ring septums. Rapidly oscillates between the poles of the cell to destabilize FtsZ filaments that have formed before they mature into polar Z rings. Prevents FtsZ polymerization.</text>
</comment>
<comment type="subunit">
    <text evidence="1">Interacts with MinD and FtsZ.</text>
</comment>
<comment type="similarity">
    <text evidence="1">Belongs to the MinC family.</text>
</comment>
<reference key="1">
    <citation type="submission" date="2008-02" db="EMBL/GenBank/DDBJ databases">
        <title>Complete sequence of Shewanella woodyi ATCC 51908.</title>
        <authorList>
            <consortium name="US DOE Joint Genome Institute"/>
            <person name="Copeland A."/>
            <person name="Lucas S."/>
            <person name="Lapidus A."/>
            <person name="Glavina del Rio T."/>
            <person name="Dalin E."/>
            <person name="Tice H."/>
            <person name="Bruce D."/>
            <person name="Goodwin L."/>
            <person name="Pitluck S."/>
            <person name="Sims D."/>
            <person name="Brettin T."/>
            <person name="Detter J.C."/>
            <person name="Han C."/>
            <person name="Kuske C.R."/>
            <person name="Schmutz J."/>
            <person name="Larimer F."/>
            <person name="Land M."/>
            <person name="Hauser L."/>
            <person name="Kyrpides N."/>
            <person name="Lykidis A."/>
            <person name="Zhao J.-S."/>
            <person name="Richardson P."/>
        </authorList>
    </citation>
    <scope>NUCLEOTIDE SEQUENCE [LARGE SCALE GENOMIC DNA]</scope>
    <source>
        <strain>ATCC 51908 / MS32</strain>
    </source>
</reference>
<feature type="chain" id="PRO_1000114295" description="Probable septum site-determining protein MinC">
    <location>
        <begin position="1"/>
        <end position="221"/>
    </location>
</feature>
<gene>
    <name evidence="1" type="primary">minC</name>
    <name type="ordered locus">Swoo_2114</name>
</gene>
<accession>B1KRJ1</accession>